<organism>
    <name type="scientific">Methanocaldococcus jannaschii (strain ATCC 43067 / DSM 2661 / JAL-1 / JCM 10045 / NBRC 100440)</name>
    <name type="common">Methanococcus jannaschii</name>
    <dbReference type="NCBI Taxonomy" id="243232"/>
    <lineage>
        <taxon>Archaea</taxon>
        <taxon>Methanobacteriati</taxon>
        <taxon>Methanobacteriota</taxon>
        <taxon>Methanomada group</taxon>
        <taxon>Methanococci</taxon>
        <taxon>Methanococcales</taxon>
        <taxon>Methanocaldococcaceae</taxon>
        <taxon>Methanocaldococcus</taxon>
    </lineage>
</organism>
<comment type="function">
    <text evidence="1">Catalyzes the anti-1,4-elimination of the C-3 phosphate and the C-6 proR hydrogen from 5-enolpyruvylshikimate-3-phosphate (EPSP) to yield chorismate, which is the branch point compound that serves as the starting substrate for the three terminal pathways of aromatic amino acid biosynthesis. This reaction introduces a second double bond into the aromatic ring system.</text>
</comment>
<comment type="catalytic activity">
    <reaction evidence="1">
        <text>5-O-(1-carboxyvinyl)-3-phosphoshikimate = chorismate + phosphate</text>
        <dbReference type="Rhea" id="RHEA:21020"/>
        <dbReference type="ChEBI" id="CHEBI:29748"/>
        <dbReference type="ChEBI" id="CHEBI:43474"/>
        <dbReference type="ChEBI" id="CHEBI:57701"/>
        <dbReference type="EC" id="4.2.3.5"/>
    </reaction>
</comment>
<comment type="cofactor">
    <cofactor evidence="1">
        <name>FMNH2</name>
        <dbReference type="ChEBI" id="CHEBI:57618"/>
    </cofactor>
    <text evidence="1">Reduced FMN (FMNH(2)).</text>
</comment>
<comment type="pathway">
    <text evidence="1">Metabolic intermediate biosynthesis; chorismate biosynthesis; chorismate from D-erythrose 4-phosphate and phosphoenolpyruvate: step 7/7.</text>
</comment>
<comment type="similarity">
    <text evidence="1">Belongs to the chorismate synthase family.</text>
</comment>
<sequence>MVTLMNTYGDMFRVTVFGESHGKAVGAVVDGCPANLPLSEEDIQKELDRRRPGQSIFSTPRKEEDKVEILSGIFEGKTTGAPICSIVYNKNMRPKDYSKIKDTPRPGHADLTYRLKYKNYDYRGGGRASGRVTIGHVIGGAIAKKLLSYTYNIKIIGYTIKIGKIEGDFSYYKNPEVFENEKSLERLIEIIESNPLRCPSMNEKEMEEYVLKAMENKDSVGGVVEIVALNVPVGVGNPIFNKLNGELARALMSINAVKGVEIGAGFKAAEMYGSEMNDEMYFDDDKNIRFKTNNCGGILGGISCGTPIVLRIAVKPTPSIGKKQKTINLKTLENVEIEIEGRHDPVIVPRIVPVAEAMVAITLADLMIKGGFIHPCSL</sequence>
<protein>
    <recommendedName>
        <fullName evidence="1">Chorismate synthase</fullName>
        <shortName evidence="1">CS</shortName>
        <ecNumber evidence="1">4.2.3.5</ecNumber>
    </recommendedName>
    <alternativeName>
        <fullName evidence="1">5-enolpyruvylshikimate-3-phosphate phospholyase</fullName>
    </alternativeName>
</protein>
<feature type="chain" id="PRO_0000140690" description="Chorismate synthase">
    <location>
        <begin position="1"/>
        <end position="378"/>
    </location>
</feature>
<feature type="binding site" evidence="1">
    <location>
        <position position="50"/>
    </location>
    <ligand>
        <name>NADP(+)</name>
        <dbReference type="ChEBI" id="CHEBI:58349"/>
    </ligand>
</feature>
<feature type="binding site" evidence="1">
    <location>
        <begin position="127"/>
        <end position="129"/>
    </location>
    <ligand>
        <name>FMN</name>
        <dbReference type="ChEBI" id="CHEBI:58210"/>
    </ligand>
</feature>
<feature type="binding site" evidence="1">
    <location>
        <begin position="255"/>
        <end position="256"/>
    </location>
    <ligand>
        <name>FMN</name>
        <dbReference type="ChEBI" id="CHEBI:58210"/>
    </ligand>
</feature>
<feature type="binding site" evidence="1">
    <location>
        <position position="300"/>
    </location>
    <ligand>
        <name>FMN</name>
        <dbReference type="ChEBI" id="CHEBI:58210"/>
    </ligand>
</feature>
<feature type="binding site" evidence="1">
    <location>
        <begin position="315"/>
        <end position="319"/>
    </location>
    <ligand>
        <name>FMN</name>
        <dbReference type="ChEBI" id="CHEBI:58210"/>
    </ligand>
</feature>
<feature type="binding site" evidence="1">
    <location>
        <position position="342"/>
    </location>
    <ligand>
        <name>FMN</name>
        <dbReference type="ChEBI" id="CHEBI:58210"/>
    </ligand>
</feature>
<accession>Q58575</accession>
<proteinExistence type="inferred from homology"/>
<keyword id="KW-0028">Amino-acid biosynthesis</keyword>
<keyword id="KW-0057">Aromatic amino acid biosynthesis</keyword>
<keyword id="KW-0274">FAD</keyword>
<keyword id="KW-0285">Flavoprotein</keyword>
<keyword id="KW-0288">FMN</keyword>
<keyword id="KW-0456">Lyase</keyword>
<keyword id="KW-0521">NADP</keyword>
<keyword id="KW-1185">Reference proteome</keyword>
<evidence type="ECO:0000255" key="1">
    <source>
        <dbReference type="HAMAP-Rule" id="MF_00300"/>
    </source>
</evidence>
<gene>
    <name evidence="1" type="primary">aroC</name>
    <name type="ordered locus">MJ1175</name>
</gene>
<dbReference type="EC" id="4.2.3.5" evidence="1"/>
<dbReference type="EMBL" id="L77117">
    <property type="protein sequence ID" value="AAB99178.1"/>
    <property type="molecule type" value="Genomic_DNA"/>
</dbReference>
<dbReference type="PIR" id="F64446">
    <property type="entry name" value="F64446"/>
</dbReference>
<dbReference type="SMR" id="Q58575"/>
<dbReference type="FunCoup" id="Q58575">
    <property type="interactions" value="177"/>
</dbReference>
<dbReference type="STRING" id="243232.MJ_1175"/>
<dbReference type="PaxDb" id="243232-MJ_1175"/>
<dbReference type="EnsemblBacteria" id="AAB99178">
    <property type="protein sequence ID" value="AAB99178"/>
    <property type="gene ID" value="MJ_1175"/>
</dbReference>
<dbReference type="KEGG" id="mja:MJ_1175"/>
<dbReference type="eggNOG" id="arCOG04133">
    <property type="taxonomic scope" value="Archaea"/>
</dbReference>
<dbReference type="HOGENOM" id="CLU_034547_0_2_2"/>
<dbReference type="InParanoid" id="Q58575"/>
<dbReference type="PhylomeDB" id="Q58575"/>
<dbReference type="UniPathway" id="UPA00053">
    <property type="reaction ID" value="UER00090"/>
</dbReference>
<dbReference type="Proteomes" id="UP000000805">
    <property type="component" value="Chromosome"/>
</dbReference>
<dbReference type="GO" id="GO:0005829">
    <property type="term" value="C:cytosol"/>
    <property type="evidence" value="ECO:0000318"/>
    <property type="project" value="GO_Central"/>
</dbReference>
<dbReference type="GO" id="GO:0004107">
    <property type="term" value="F:chorismate synthase activity"/>
    <property type="evidence" value="ECO:0000318"/>
    <property type="project" value="GO_Central"/>
</dbReference>
<dbReference type="GO" id="GO:0010181">
    <property type="term" value="F:FMN binding"/>
    <property type="evidence" value="ECO:0000318"/>
    <property type="project" value="GO_Central"/>
</dbReference>
<dbReference type="GO" id="GO:0008652">
    <property type="term" value="P:amino acid biosynthetic process"/>
    <property type="evidence" value="ECO:0007669"/>
    <property type="project" value="UniProtKB-KW"/>
</dbReference>
<dbReference type="GO" id="GO:0009073">
    <property type="term" value="P:aromatic amino acid family biosynthetic process"/>
    <property type="evidence" value="ECO:0000318"/>
    <property type="project" value="GO_Central"/>
</dbReference>
<dbReference type="GO" id="GO:0009423">
    <property type="term" value="P:chorismate biosynthetic process"/>
    <property type="evidence" value="ECO:0000318"/>
    <property type="project" value="GO_Central"/>
</dbReference>
<dbReference type="CDD" id="cd07304">
    <property type="entry name" value="Chorismate_synthase"/>
    <property type="match status" value="1"/>
</dbReference>
<dbReference type="FunFam" id="3.60.150.10:FF:000003">
    <property type="entry name" value="Chorismate synthase"/>
    <property type="match status" value="1"/>
</dbReference>
<dbReference type="Gene3D" id="3.60.150.10">
    <property type="entry name" value="Chorismate synthase AroC"/>
    <property type="match status" value="1"/>
</dbReference>
<dbReference type="HAMAP" id="MF_00300">
    <property type="entry name" value="Chorismate_synth"/>
    <property type="match status" value="1"/>
</dbReference>
<dbReference type="InterPro" id="IPR000453">
    <property type="entry name" value="Chorismate_synth"/>
</dbReference>
<dbReference type="InterPro" id="IPR035904">
    <property type="entry name" value="Chorismate_synth_AroC_sf"/>
</dbReference>
<dbReference type="InterPro" id="IPR020541">
    <property type="entry name" value="Chorismate_synthase_CS"/>
</dbReference>
<dbReference type="NCBIfam" id="TIGR00033">
    <property type="entry name" value="aroC"/>
    <property type="match status" value="1"/>
</dbReference>
<dbReference type="NCBIfam" id="NF003793">
    <property type="entry name" value="PRK05382.1"/>
    <property type="match status" value="1"/>
</dbReference>
<dbReference type="PANTHER" id="PTHR21085">
    <property type="entry name" value="CHORISMATE SYNTHASE"/>
    <property type="match status" value="1"/>
</dbReference>
<dbReference type="PANTHER" id="PTHR21085:SF0">
    <property type="entry name" value="CHORISMATE SYNTHASE"/>
    <property type="match status" value="1"/>
</dbReference>
<dbReference type="Pfam" id="PF01264">
    <property type="entry name" value="Chorismate_synt"/>
    <property type="match status" value="1"/>
</dbReference>
<dbReference type="PIRSF" id="PIRSF001456">
    <property type="entry name" value="Chorismate_synth"/>
    <property type="match status" value="1"/>
</dbReference>
<dbReference type="SUPFAM" id="SSF103263">
    <property type="entry name" value="Chorismate synthase, AroC"/>
    <property type="match status" value="1"/>
</dbReference>
<dbReference type="PROSITE" id="PS00787">
    <property type="entry name" value="CHORISMATE_SYNTHASE_1"/>
    <property type="match status" value="1"/>
</dbReference>
<dbReference type="PROSITE" id="PS00788">
    <property type="entry name" value="CHORISMATE_SYNTHASE_2"/>
    <property type="match status" value="1"/>
</dbReference>
<dbReference type="PROSITE" id="PS00789">
    <property type="entry name" value="CHORISMATE_SYNTHASE_3"/>
    <property type="match status" value="1"/>
</dbReference>
<name>AROC_METJA</name>
<reference key="1">
    <citation type="journal article" date="1996" name="Science">
        <title>Complete genome sequence of the methanogenic archaeon, Methanococcus jannaschii.</title>
        <authorList>
            <person name="Bult C.J."/>
            <person name="White O."/>
            <person name="Olsen G.J."/>
            <person name="Zhou L."/>
            <person name="Fleischmann R.D."/>
            <person name="Sutton G.G."/>
            <person name="Blake J.A."/>
            <person name="FitzGerald L.M."/>
            <person name="Clayton R.A."/>
            <person name="Gocayne J.D."/>
            <person name="Kerlavage A.R."/>
            <person name="Dougherty B.A."/>
            <person name="Tomb J.-F."/>
            <person name="Adams M.D."/>
            <person name="Reich C.I."/>
            <person name="Overbeek R."/>
            <person name="Kirkness E.F."/>
            <person name="Weinstock K.G."/>
            <person name="Merrick J.M."/>
            <person name="Glodek A."/>
            <person name="Scott J.L."/>
            <person name="Geoghagen N.S.M."/>
            <person name="Weidman J.F."/>
            <person name="Fuhrmann J.L."/>
            <person name="Nguyen D."/>
            <person name="Utterback T.R."/>
            <person name="Kelley J.M."/>
            <person name="Peterson J.D."/>
            <person name="Sadow P.W."/>
            <person name="Hanna M.C."/>
            <person name="Cotton M.D."/>
            <person name="Roberts K.M."/>
            <person name="Hurst M.A."/>
            <person name="Kaine B.P."/>
            <person name="Borodovsky M."/>
            <person name="Klenk H.-P."/>
            <person name="Fraser C.M."/>
            <person name="Smith H.O."/>
            <person name="Woese C.R."/>
            <person name="Venter J.C."/>
        </authorList>
    </citation>
    <scope>NUCLEOTIDE SEQUENCE [LARGE SCALE GENOMIC DNA]</scope>
    <source>
        <strain>ATCC 43067 / DSM 2661 / JAL-1 / JCM 10045 / NBRC 100440</strain>
    </source>
</reference>